<comment type="function">
    <text evidence="1">Functions in complex with FlhC as a master transcriptional regulator that regulates transcription of several flagellar and non-flagellar operons by binding to their promoter region. Activates expression of class 2 flagellar genes, including fliA, which is a flagellum-specific sigma factor that turns on the class 3 genes. Also regulates genes whose products function in a variety of physiological pathways.</text>
</comment>
<comment type="subunit">
    <text evidence="1">Homodimer; disulfide-linked. Forms a heterohexamer composed of two FlhC and four FlhD subunits. Each FlhC binds a FlhD dimer, forming a heterotrimer, and a hexamer assembles by dimerization of two heterotrimers.</text>
</comment>
<comment type="subcellular location">
    <subcellularLocation>
        <location evidence="1">Cytoplasm</location>
    </subcellularLocation>
</comment>
<comment type="domain">
    <text evidence="1">The C-terminal region contains a putative helix-turn-helix (HTH) motif, suggesting that this region may bind DNA.</text>
</comment>
<comment type="similarity">
    <text evidence="1">Belongs to the FlhD family.</text>
</comment>
<feature type="chain" id="PRO_0000182730" description="Flagellar transcriptional regulator FlhD">
    <location>
        <begin position="1"/>
        <end position="116"/>
    </location>
</feature>
<feature type="disulfide bond" description="Interchain" evidence="1">
    <location>
        <position position="65"/>
    </location>
</feature>
<accession>Q669S5</accession>
<name>FLHD_YERPS</name>
<dbReference type="EMBL" id="BX936398">
    <property type="protein sequence ID" value="CAH21647.1"/>
    <property type="molecule type" value="Genomic_DNA"/>
</dbReference>
<dbReference type="RefSeq" id="WP_011192574.1">
    <property type="nucleotide sequence ID" value="NC_006155.1"/>
</dbReference>
<dbReference type="SMR" id="Q669S5"/>
<dbReference type="GeneID" id="96665894"/>
<dbReference type="KEGG" id="ypo:BZ17_43"/>
<dbReference type="KEGG" id="yps:YPTB2409"/>
<dbReference type="PATRIC" id="fig|273123.14.peg.46"/>
<dbReference type="Proteomes" id="UP000001011">
    <property type="component" value="Chromosome"/>
</dbReference>
<dbReference type="GO" id="GO:0005737">
    <property type="term" value="C:cytoplasm"/>
    <property type="evidence" value="ECO:0007669"/>
    <property type="project" value="UniProtKB-SubCell"/>
</dbReference>
<dbReference type="GO" id="GO:0003677">
    <property type="term" value="F:DNA binding"/>
    <property type="evidence" value="ECO:0007669"/>
    <property type="project" value="UniProtKB-UniRule"/>
</dbReference>
<dbReference type="GO" id="GO:0044780">
    <property type="term" value="P:bacterial-type flagellum assembly"/>
    <property type="evidence" value="ECO:0007669"/>
    <property type="project" value="InterPro"/>
</dbReference>
<dbReference type="GO" id="GO:0045893">
    <property type="term" value="P:positive regulation of DNA-templated transcription"/>
    <property type="evidence" value="ECO:0007669"/>
    <property type="project" value="InterPro"/>
</dbReference>
<dbReference type="GO" id="GO:1902208">
    <property type="term" value="P:regulation of bacterial-type flagellum assembly"/>
    <property type="evidence" value="ECO:0007669"/>
    <property type="project" value="UniProtKB-UniRule"/>
</dbReference>
<dbReference type="Gene3D" id="1.10.4000.10">
    <property type="entry name" value="Flagellar transcriptional activator FlhD"/>
    <property type="match status" value="1"/>
</dbReference>
<dbReference type="HAMAP" id="MF_00725">
    <property type="entry name" value="FlhD"/>
    <property type="match status" value="1"/>
</dbReference>
<dbReference type="InterPro" id="IPR023559">
    <property type="entry name" value="Flagellar_FlhD"/>
</dbReference>
<dbReference type="InterPro" id="IPR036194">
    <property type="entry name" value="FlhD_sf"/>
</dbReference>
<dbReference type="NCBIfam" id="NF002783">
    <property type="entry name" value="PRK02909.1-1"/>
    <property type="match status" value="1"/>
</dbReference>
<dbReference type="Pfam" id="PF05247">
    <property type="entry name" value="FlhD"/>
    <property type="match status" value="1"/>
</dbReference>
<dbReference type="SUPFAM" id="SSF63592">
    <property type="entry name" value="Flagellar transcriptional activator FlhD"/>
    <property type="match status" value="1"/>
</dbReference>
<proteinExistence type="inferred from homology"/>
<gene>
    <name evidence="1" type="primary">flhD</name>
    <name type="ordered locus">YPTB2409</name>
</gene>
<keyword id="KW-0010">Activator</keyword>
<keyword id="KW-1005">Bacterial flagellum biogenesis</keyword>
<keyword id="KW-0963">Cytoplasm</keyword>
<keyword id="KW-1015">Disulfide bond</keyword>
<keyword id="KW-0238">DNA-binding</keyword>
<keyword id="KW-0804">Transcription</keyword>
<keyword id="KW-0805">Transcription regulation</keyword>
<organism>
    <name type="scientific">Yersinia pseudotuberculosis serotype I (strain IP32953)</name>
    <dbReference type="NCBI Taxonomy" id="273123"/>
    <lineage>
        <taxon>Bacteria</taxon>
        <taxon>Pseudomonadati</taxon>
        <taxon>Pseudomonadota</taxon>
        <taxon>Gammaproteobacteria</taxon>
        <taxon>Enterobacterales</taxon>
        <taxon>Yersiniaceae</taxon>
        <taxon>Yersinia</taxon>
    </lineage>
</organism>
<protein>
    <recommendedName>
        <fullName evidence="1">Flagellar transcriptional regulator FlhD</fullName>
    </recommendedName>
</protein>
<sequence length="116" mass="13235">MSTSELLKHIYDINLSYLLLAQRLINDEKASAMFRLGITDTMADALSQLTLPQMVKLAETNQLVCHFRFSDHNTIHHLTKESRVDDLQQIHTGILLSSHLLHELSLKDDSTPKKRA</sequence>
<evidence type="ECO:0000255" key="1">
    <source>
        <dbReference type="HAMAP-Rule" id="MF_00725"/>
    </source>
</evidence>
<reference key="1">
    <citation type="journal article" date="2004" name="Proc. Natl. Acad. Sci. U.S.A.">
        <title>Insights into the evolution of Yersinia pestis through whole-genome comparison with Yersinia pseudotuberculosis.</title>
        <authorList>
            <person name="Chain P.S.G."/>
            <person name="Carniel E."/>
            <person name="Larimer F.W."/>
            <person name="Lamerdin J."/>
            <person name="Stoutland P.O."/>
            <person name="Regala W.M."/>
            <person name="Georgescu A.M."/>
            <person name="Vergez L.M."/>
            <person name="Land M.L."/>
            <person name="Motin V.L."/>
            <person name="Brubaker R.R."/>
            <person name="Fowler J."/>
            <person name="Hinnebusch J."/>
            <person name="Marceau M."/>
            <person name="Medigue C."/>
            <person name="Simonet M."/>
            <person name="Chenal-Francisque V."/>
            <person name="Souza B."/>
            <person name="Dacheux D."/>
            <person name="Elliott J.M."/>
            <person name="Derbise A."/>
            <person name="Hauser L.J."/>
            <person name="Garcia E."/>
        </authorList>
    </citation>
    <scope>NUCLEOTIDE SEQUENCE [LARGE SCALE GENOMIC DNA]</scope>
    <source>
        <strain>IP32953</strain>
    </source>
</reference>